<keyword id="KW-0028">Amino-acid biosynthesis</keyword>
<keyword id="KW-0057">Aromatic amino acid biosynthesis</keyword>
<keyword id="KW-0170">Cobalt</keyword>
<keyword id="KW-0963">Cytoplasm</keyword>
<keyword id="KW-0456">Lyase</keyword>
<keyword id="KW-0479">Metal-binding</keyword>
<keyword id="KW-0520">NAD</keyword>
<keyword id="KW-0547">Nucleotide-binding</keyword>
<keyword id="KW-1185">Reference proteome</keyword>
<keyword id="KW-0862">Zinc</keyword>
<organism>
    <name type="scientific">Campylobacter jejuni subsp. jejuni serotype O:2 (strain ATCC 700819 / NCTC 11168)</name>
    <dbReference type="NCBI Taxonomy" id="192222"/>
    <lineage>
        <taxon>Bacteria</taxon>
        <taxon>Pseudomonadati</taxon>
        <taxon>Campylobacterota</taxon>
        <taxon>Epsilonproteobacteria</taxon>
        <taxon>Campylobacterales</taxon>
        <taxon>Campylobacteraceae</taxon>
        <taxon>Campylobacter</taxon>
    </lineage>
</organism>
<feature type="chain" id="PRO_0000140720" description="3-dehydroquinate synthase">
    <location>
        <begin position="1"/>
        <end position="351"/>
    </location>
</feature>
<feature type="binding site" evidence="1">
    <location>
        <begin position="60"/>
        <end position="65"/>
    </location>
    <ligand>
        <name>NAD(+)</name>
        <dbReference type="ChEBI" id="CHEBI:57540"/>
    </ligand>
</feature>
<feature type="binding site" evidence="1">
    <location>
        <begin position="94"/>
        <end position="98"/>
    </location>
    <ligand>
        <name>NAD(+)</name>
        <dbReference type="ChEBI" id="CHEBI:57540"/>
    </ligand>
</feature>
<feature type="binding site" evidence="1">
    <location>
        <begin position="118"/>
        <end position="119"/>
    </location>
    <ligand>
        <name>NAD(+)</name>
        <dbReference type="ChEBI" id="CHEBI:57540"/>
    </ligand>
</feature>
<feature type="binding site" evidence="1">
    <location>
        <position position="131"/>
    </location>
    <ligand>
        <name>NAD(+)</name>
        <dbReference type="ChEBI" id="CHEBI:57540"/>
    </ligand>
</feature>
<feature type="binding site" evidence="1">
    <location>
        <position position="140"/>
    </location>
    <ligand>
        <name>NAD(+)</name>
        <dbReference type="ChEBI" id="CHEBI:57540"/>
    </ligand>
</feature>
<feature type="binding site" evidence="1">
    <location>
        <begin position="158"/>
        <end position="161"/>
    </location>
    <ligand>
        <name>NAD(+)</name>
        <dbReference type="ChEBI" id="CHEBI:57540"/>
    </ligand>
</feature>
<feature type="binding site" evidence="1">
    <location>
        <position position="173"/>
    </location>
    <ligand>
        <name>Zn(2+)</name>
        <dbReference type="ChEBI" id="CHEBI:29105"/>
    </ligand>
</feature>
<feature type="binding site" evidence="1">
    <location>
        <position position="239"/>
    </location>
    <ligand>
        <name>Zn(2+)</name>
        <dbReference type="ChEBI" id="CHEBI:29105"/>
    </ligand>
</feature>
<feature type="binding site" evidence="1">
    <location>
        <position position="256"/>
    </location>
    <ligand>
        <name>Zn(2+)</name>
        <dbReference type="ChEBI" id="CHEBI:29105"/>
    </ligand>
</feature>
<name>AROB_CAMJE</name>
<proteinExistence type="inferred from homology"/>
<comment type="function">
    <text evidence="1">Catalyzes the conversion of 3-deoxy-D-arabino-heptulosonate 7-phosphate (DAHP) to dehydroquinate (DHQ).</text>
</comment>
<comment type="catalytic activity">
    <reaction evidence="1">
        <text>7-phospho-2-dehydro-3-deoxy-D-arabino-heptonate = 3-dehydroquinate + phosphate</text>
        <dbReference type="Rhea" id="RHEA:21968"/>
        <dbReference type="ChEBI" id="CHEBI:32364"/>
        <dbReference type="ChEBI" id="CHEBI:43474"/>
        <dbReference type="ChEBI" id="CHEBI:58394"/>
        <dbReference type="EC" id="4.2.3.4"/>
    </reaction>
</comment>
<comment type="cofactor">
    <cofactor evidence="1">
        <name>NAD(+)</name>
        <dbReference type="ChEBI" id="CHEBI:57540"/>
    </cofactor>
</comment>
<comment type="cofactor">
    <cofactor evidence="1">
        <name>Co(2+)</name>
        <dbReference type="ChEBI" id="CHEBI:48828"/>
    </cofactor>
    <cofactor evidence="1">
        <name>Zn(2+)</name>
        <dbReference type="ChEBI" id="CHEBI:29105"/>
    </cofactor>
    <text evidence="1">Binds 1 divalent metal cation per subunit. Can use either Co(2+) or Zn(2+).</text>
</comment>
<comment type="pathway">
    <text evidence="1">Metabolic intermediate biosynthesis; chorismate biosynthesis; chorismate from D-erythrose 4-phosphate and phosphoenolpyruvate: step 2/7.</text>
</comment>
<comment type="subcellular location">
    <subcellularLocation>
        <location evidence="1">Cytoplasm</location>
    </subcellularLocation>
</comment>
<comment type="similarity">
    <text evidence="1">Belongs to the sugar phosphate cyclases superfamily. Dehydroquinate synthase family.</text>
</comment>
<evidence type="ECO:0000255" key="1">
    <source>
        <dbReference type="HAMAP-Rule" id="MF_00110"/>
    </source>
</evidence>
<reference key="1">
    <citation type="journal article" date="2000" name="Nature">
        <title>The genome sequence of the food-borne pathogen Campylobacter jejuni reveals hypervariable sequences.</title>
        <authorList>
            <person name="Parkhill J."/>
            <person name="Wren B.W."/>
            <person name="Mungall K.L."/>
            <person name="Ketley J.M."/>
            <person name="Churcher C.M."/>
            <person name="Basham D."/>
            <person name="Chillingworth T."/>
            <person name="Davies R.M."/>
            <person name="Feltwell T."/>
            <person name="Holroyd S."/>
            <person name="Jagels K."/>
            <person name="Karlyshev A.V."/>
            <person name="Moule S."/>
            <person name="Pallen M.J."/>
            <person name="Penn C.W."/>
            <person name="Quail M.A."/>
            <person name="Rajandream M.A."/>
            <person name="Rutherford K.M."/>
            <person name="van Vliet A.H.M."/>
            <person name="Whitehead S."/>
            <person name="Barrell B.G."/>
        </authorList>
    </citation>
    <scope>NUCLEOTIDE SEQUENCE [LARGE SCALE GENOMIC DNA]</scope>
    <source>
        <strain>ATCC 700819 / NCTC 11168</strain>
    </source>
</reference>
<accession>Q9PNT2</accession>
<accession>Q0P9P4</accession>
<sequence>MQVEVKLKENAYKVYIDELEELEFDSKVFILSNPKISGLHLKTLLSKIKAKEIFIATVKDGEEYKNLSTMEEILNQMFNSKLDRKSVLISFGGGVISDMGGFAASIYQRGIDFINIPTTLLACVDAAVGGKTGVNNNFGKNLIGTFYQPKAVYCESFFLKTLSSRELAAGMAEFIKMAAMFDYSILDFIEKIDEKSFLNATCENEIFTQIIAKSIELKSRVVEQDEKESRLRMLLNYGHTFAHVIENFTDYKLYLHGEAVAIGMVMANQLALNLGLLDKMQSQRIKDILLKFGLPISYKINNVDEFYEAFFMDKKSSNKKINFVLASPLGKGLIKGDISKEDIIATLREFQ</sequence>
<protein>
    <recommendedName>
        <fullName evidence="1">3-dehydroquinate synthase</fullName>
        <shortName evidence="1">DHQS</shortName>
        <ecNumber evidence="1">4.2.3.4</ecNumber>
    </recommendedName>
</protein>
<gene>
    <name evidence="1" type="primary">aroB</name>
    <name type="ordered locus">Cj1008c</name>
</gene>
<dbReference type="EC" id="4.2.3.4" evidence="1"/>
<dbReference type="EMBL" id="AL111168">
    <property type="protein sequence ID" value="CAL35126.1"/>
    <property type="molecule type" value="Genomic_DNA"/>
</dbReference>
<dbReference type="PIR" id="E81376">
    <property type="entry name" value="E81376"/>
</dbReference>
<dbReference type="RefSeq" id="WP_002852978.1">
    <property type="nucleotide sequence ID" value="NZ_SZUC01000001.1"/>
</dbReference>
<dbReference type="RefSeq" id="YP_002344403.1">
    <property type="nucleotide sequence ID" value="NC_002163.1"/>
</dbReference>
<dbReference type="SMR" id="Q9PNT2"/>
<dbReference type="IntAct" id="Q9PNT2">
    <property type="interactions" value="22"/>
</dbReference>
<dbReference type="STRING" id="192222.Cj1008c"/>
<dbReference type="PaxDb" id="192222-Cj1008c"/>
<dbReference type="EnsemblBacteria" id="CAL35126">
    <property type="protein sequence ID" value="CAL35126"/>
    <property type="gene ID" value="Cj1008c"/>
</dbReference>
<dbReference type="GeneID" id="905299"/>
<dbReference type="KEGG" id="cje:Cj1008c"/>
<dbReference type="PATRIC" id="fig|192222.6.peg.990"/>
<dbReference type="eggNOG" id="COG0337">
    <property type="taxonomic scope" value="Bacteria"/>
</dbReference>
<dbReference type="HOGENOM" id="CLU_001201_0_1_7"/>
<dbReference type="OrthoDB" id="9806583at2"/>
<dbReference type="UniPathway" id="UPA00053">
    <property type="reaction ID" value="UER00085"/>
</dbReference>
<dbReference type="Proteomes" id="UP000000799">
    <property type="component" value="Chromosome"/>
</dbReference>
<dbReference type="GO" id="GO:0005737">
    <property type="term" value="C:cytoplasm"/>
    <property type="evidence" value="ECO:0007669"/>
    <property type="project" value="UniProtKB-SubCell"/>
</dbReference>
<dbReference type="GO" id="GO:0003856">
    <property type="term" value="F:3-dehydroquinate synthase activity"/>
    <property type="evidence" value="ECO:0007669"/>
    <property type="project" value="UniProtKB-UniRule"/>
</dbReference>
<dbReference type="GO" id="GO:0046872">
    <property type="term" value="F:metal ion binding"/>
    <property type="evidence" value="ECO:0007669"/>
    <property type="project" value="UniProtKB-KW"/>
</dbReference>
<dbReference type="GO" id="GO:0000166">
    <property type="term" value="F:nucleotide binding"/>
    <property type="evidence" value="ECO:0007669"/>
    <property type="project" value="UniProtKB-KW"/>
</dbReference>
<dbReference type="GO" id="GO:0008652">
    <property type="term" value="P:amino acid biosynthetic process"/>
    <property type="evidence" value="ECO:0007669"/>
    <property type="project" value="UniProtKB-KW"/>
</dbReference>
<dbReference type="GO" id="GO:0009073">
    <property type="term" value="P:aromatic amino acid family biosynthetic process"/>
    <property type="evidence" value="ECO:0007669"/>
    <property type="project" value="UniProtKB-KW"/>
</dbReference>
<dbReference type="GO" id="GO:0009423">
    <property type="term" value="P:chorismate biosynthetic process"/>
    <property type="evidence" value="ECO:0007669"/>
    <property type="project" value="UniProtKB-UniRule"/>
</dbReference>
<dbReference type="CDD" id="cd08195">
    <property type="entry name" value="DHQS"/>
    <property type="match status" value="1"/>
</dbReference>
<dbReference type="FunFam" id="3.40.50.1970:FF:000007">
    <property type="entry name" value="Pentafunctional AROM polypeptide"/>
    <property type="match status" value="1"/>
</dbReference>
<dbReference type="Gene3D" id="3.40.50.1970">
    <property type="match status" value="1"/>
</dbReference>
<dbReference type="Gene3D" id="1.20.1090.10">
    <property type="entry name" value="Dehydroquinate synthase-like - alpha domain"/>
    <property type="match status" value="1"/>
</dbReference>
<dbReference type="HAMAP" id="MF_00110">
    <property type="entry name" value="DHQ_synthase"/>
    <property type="match status" value="1"/>
</dbReference>
<dbReference type="InterPro" id="IPR050071">
    <property type="entry name" value="Dehydroquinate_synthase"/>
</dbReference>
<dbReference type="InterPro" id="IPR016037">
    <property type="entry name" value="DHQ_synth_AroB"/>
</dbReference>
<dbReference type="InterPro" id="IPR030963">
    <property type="entry name" value="DHQ_synth_fam"/>
</dbReference>
<dbReference type="InterPro" id="IPR030960">
    <property type="entry name" value="DHQS/DOIS_N"/>
</dbReference>
<dbReference type="InterPro" id="IPR056179">
    <property type="entry name" value="DHQS_C"/>
</dbReference>
<dbReference type="NCBIfam" id="TIGR01357">
    <property type="entry name" value="aroB"/>
    <property type="match status" value="1"/>
</dbReference>
<dbReference type="PANTHER" id="PTHR43622">
    <property type="entry name" value="3-DEHYDROQUINATE SYNTHASE"/>
    <property type="match status" value="1"/>
</dbReference>
<dbReference type="PANTHER" id="PTHR43622:SF7">
    <property type="entry name" value="3-DEHYDROQUINATE SYNTHASE, CHLOROPLASTIC"/>
    <property type="match status" value="1"/>
</dbReference>
<dbReference type="Pfam" id="PF01761">
    <property type="entry name" value="DHQ_synthase"/>
    <property type="match status" value="1"/>
</dbReference>
<dbReference type="Pfam" id="PF24621">
    <property type="entry name" value="DHQS_C"/>
    <property type="match status" value="1"/>
</dbReference>
<dbReference type="PIRSF" id="PIRSF001455">
    <property type="entry name" value="DHQ_synth"/>
    <property type="match status" value="1"/>
</dbReference>
<dbReference type="SUPFAM" id="SSF56796">
    <property type="entry name" value="Dehydroquinate synthase-like"/>
    <property type="match status" value="1"/>
</dbReference>